<feature type="chain" id="PRO_1000204976" description="ATP-dependent Clp protease adapter protein ClpS">
    <location>
        <begin position="1"/>
        <end position="108"/>
    </location>
</feature>
<feature type="region of interest" description="Disordered" evidence="2">
    <location>
        <begin position="1"/>
        <end position="21"/>
    </location>
</feature>
<feature type="compositionally biased region" description="Basic and acidic residues" evidence="2">
    <location>
        <begin position="1"/>
        <end position="10"/>
    </location>
</feature>
<proteinExistence type="inferred from homology"/>
<accession>B6INJ3</accession>
<reference key="1">
    <citation type="submission" date="2007-03" db="EMBL/GenBank/DDBJ databases">
        <title>Genome sequence of Rhodospirillum centenum.</title>
        <authorList>
            <person name="Touchman J.W."/>
            <person name="Bauer C."/>
            <person name="Blankenship R.E."/>
        </authorList>
    </citation>
    <scope>NUCLEOTIDE SEQUENCE [LARGE SCALE GENOMIC DNA]</scope>
    <source>
        <strain>ATCC 51521 / SW</strain>
    </source>
</reference>
<protein>
    <recommendedName>
        <fullName evidence="1">ATP-dependent Clp protease adapter protein ClpS</fullName>
    </recommendedName>
</protein>
<dbReference type="EMBL" id="CP000613">
    <property type="protein sequence ID" value="ACI99090.1"/>
    <property type="molecule type" value="Genomic_DNA"/>
</dbReference>
<dbReference type="RefSeq" id="WP_012566875.1">
    <property type="nucleotide sequence ID" value="NC_011420.2"/>
</dbReference>
<dbReference type="SMR" id="B6INJ3"/>
<dbReference type="STRING" id="414684.RC1_1692"/>
<dbReference type="KEGG" id="rce:RC1_1692"/>
<dbReference type="eggNOG" id="COG2127">
    <property type="taxonomic scope" value="Bacteria"/>
</dbReference>
<dbReference type="HOGENOM" id="CLU_134358_0_0_5"/>
<dbReference type="OrthoDB" id="9796121at2"/>
<dbReference type="Proteomes" id="UP000001591">
    <property type="component" value="Chromosome"/>
</dbReference>
<dbReference type="GO" id="GO:0030163">
    <property type="term" value="P:protein catabolic process"/>
    <property type="evidence" value="ECO:0007669"/>
    <property type="project" value="InterPro"/>
</dbReference>
<dbReference type="GO" id="GO:0006508">
    <property type="term" value="P:proteolysis"/>
    <property type="evidence" value="ECO:0007669"/>
    <property type="project" value="UniProtKB-UniRule"/>
</dbReference>
<dbReference type="FunFam" id="3.30.1390.10:FF:000002">
    <property type="entry name" value="ATP-dependent Clp protease adapter protein ClpS"/>
    <property type="match status" value="1"/>
</dbReference>
<dbReference type="Gene3D" id="3.30.1390.10">
    <property type="match status" value="1"/>
</dbReference>
<dbReference type="HAMAP" id="MF_00302">
    <property type="entry name" value="ClpS"/>
    <property type="match status" value="1"/>
</dbReference>
<dbReference type="InterPro" id="IPR022935">
    <property type="entry name" value="ClpS"/>
</dbReference>
<dbReference type="InterPro" id="IPR003769">
    <property type="entry name" value="ClpS_core"/>
</dbReference>
<dbReference type="InterPro" id="IPR014719">
    <property type="entry name" value="Ribosomal_bL12_C/ClpS-like"/>
</dbReference>
<dbReference type="NCBIfam" id="NF000669">
    <property type="entry name" value="PRK00033.1-2"/>
    <property type="match status" value="1"/>
</dbReference>
<dbReference type="NCBIfam" id="NF000672">
    <property type="entry name" value="PRK00033.1-5"/>
    <property type="match status" value="1"/>
</dbReference>
<dbReference type="PANTHER" id="PTHR33473:SF19">
    <property type="entry name" value="ATP-DEPENDENT CLP PROTEASE ADAPTER PROTEIN CLPS"/>
    <property type="match status" value="1"/>
</dbReference>
<dbReference type="PANTHER" id="PTHR33473">
    <property type="entry name" value="ATP-DEPENDENT CLP PROTEASE ADAPTER PROTEIN CLPS1, CHLOROPLASTIC"/>
    <property type="match status" value="1"/>
</dbReference>
<dbReference type="Pfam" id="PF02617">
    <property type="entry name" value="ClpS"/>
    <property type="match status" value="1"/>
</dbReference>
<dbReference type="SUPFAM" id="SSF54736">
    <property type="entry name" value="ClpS-like"/>
    <property type="match status" value="1"/>
</dbReference>
<organism>
    <name type="scientific">Rhodospirillum centenum (strain ATCC 51521 / SW)</name>
    <dbReference type="NCBI Taxonomy" id="414684"/>
    <lineage>
        <taxon>Bacteria</taxon>
        <taxon>Pseudomonadati</taxon>
        <taxon>Pseudomonadota</taxon>
        <taxon>Alphaproteobacteria</taxon>
        <taxon>Rhodospirillales</taxon>
        <taxon>Rhodospirillaceae</taxon>
        <taxon>Rhodospirillum</taxon>
    </lineage>
</organism>
<sequence>MADSDKHGDEGPSTGVVVKAKPKTKKPSMYKVLMLNDDYTPMEFVVHVLERFFNKNREEATRIMLHVHRRGVGVCGVFTYEVAETKVTQVMDFARQHQHPLQCTLEKD</sequence>
<name>CLPS_RHOCS</name>
<comment type="function">
    <text evidence="1">Involved in the modulation of the specificity of the ClpAP-mediated ATP-dependent protein degradation.</text>
</comment>
<comment type="subunit">
    <text evidence="1">Binds to the N-terminal domain of the chaperone ClpA.</text>
</comment>
<comment type="similarity">
    <text evidence="1">Belongs to the ClpS family.</text>
</comment>
<keyword id="KW-1185">Reference proteome</keyword>
<gene>
    <name evidence="1" type="primary">clpS</name>
    <name type="ordered locus">RC1_1692</name>
</gene>
<evidence type="ECO:0000255" key="1">
    <source>
        <dbReference type="HAMAP-Rule" id="MF_00302"/>
    </source>
</evidence>
<evidence type="ECO:0000256" key="2">
    <source>
        <dbReference type="SAM" id="MobiDB-lite"/>
    </source>
</evidence>